<organism>
    <name type="scientific">Homo sapiens</name>
    <name type="common">Human</name>
    <dbReference type="NCBI Taxonomy" id="9606"/>
    <lineage>
        <taxon>Eukaryota</taxon>
        <taxon>Metazoa</taxon>
        <taxon>Chordata</taxon>
        <taxon>Craniata</taxon>
        <taxon>Vertebrata</taxon>
        <taxon>Euteleostomi</taxon>
        <taxon>Mammalia</taxon>
        <taxon>Eutheria</taxon>
        <taxon>Euarchontoglires</taxon>
        <taxon>Primates</taxon>
        <taxon>Haplorrhini</taxon>
        <taxon>Catarrhini</taxon>
        <taxon>Hominidae</taxon>
        <taxon>Homo</taxon>
    </lineage>
</organism>
<reference key="1">
    <citation type="journal article" date="2004" name="Nat. Genet.">
        <title>Complete sequencing and characterization of 21,243 full-length human cDNAs.</title>
        <authorList>
            <person name="Ota T."/>
            <person name="Suzuki Y."/>
            <person name="Nishikawa T."/>
            <person name="Otsuki T."/>
            <person name="Sugiyama T."/>
            <person name="Irie R."/>
            <person name="Wakamatsu A."/>
            <person name="Hayashi K."/>
            <person name="Sato H."/>
            <person name="Nagai K."/>
            <person name="Kimura K."/>
            <person name="Makita H."/>
            <person name="Sekine M."/>
            <person name="Obayashi M."/>
            <person name="Nishi T."/>
            <person name="Shibahara T."/>
            <person name="Tanaka T."/>
            <person name="Ishii S."/>
            <person name="Yamamoto J."/>
            <person name="Saito K."/>
            <person name="Kawai Y."/>
            <person name="Isono Y."/>
            <person name="Nakamura Y."/>
            <person name="Nagahari K."/>
            <person name="Murakami K."/>
            <person name="Yasuda T."/>
            <person name="Iwayanagi T."/>
            <person name="Wagatsuma M."/>
            <person name="Shiratori A."/>
            <person name="Sudo H."/>
            <person name="Hosoiri T."/>
            <person name="Kaku Y."/>
            <person name="Kodaira H."/>
            <person name="Kondo H."/>
            <person name="Sugawara M."/>
            <person name="Takahashi M."/>
            <person name="Kanda K."/>
            <person name="Yokoi T."/>
            <person name="Furuya T."/>
            <person name="Kikkawa E."/>
            <person name="Omura Y."/>
            <person name="Abe K."/>
            <person name="Kamihara K."/>
            <person name="Katsuta N."/>
            <person name="Sato K."/>
            <person name="Tanikawa M."/>
            <person name="Yamazaki M."/>
            <person name="Ninomiya K."/>
            <person name="Ishibashi T."/>
            <person name="Yamashita H."/>
            <person name="Murakawa K."/>
            <person name="Fujimori K."/>
            <person name="Tanai H."/>
            <person name="Kimata M."/>
            <person name="Watanabe M."/>
            <person name="Hiraoka S."/>
            <person name="Chiba Y."/>
            <person name="Ishida S."/>
            <person name="Ono Y."/>
            <person name="Takiguchi S."/>
            <person name="Watanabe S."/>
            <person name="Yosida M."/>
            <person name="Hotuta T."/>
            <person name="Kusano J."/>
            <person name="Kanehori K."/>
            <person name="Takahashi-Fujii A."/>
            <person name="Hara H."/>
            <person name="Tanase T.-O."/>
            <person name="Nomura Y."/>
            <person name="Togiya S."/>
            <person name="Komai F."/>
            <person name="Hara R."/>
            <person name="Takeuchi K."/>
            <person name="Arita M."/>
            <person name="Imose N."/>
            <person name="Musashino K."/>
            <person name="Yuuki H."/>
            <person name="Oshima A."/>
            <person name="Sasaki N."/>
            <person name="Aotsuka S."/>
            <person name="Yoshikawa Y."/>
            <person name="Matsunawa H."/>
            <person name="Ichihara T."/>
            <person name="Shiohata N."/>
            <person name="Sano S."/>
            <person name="Moriya S."/>
            <person name="Momiyama H."/>
            <person name="Satoh N."/>
            <person name="Takami S."/>
            <person name="Terashima Y."/>
            <person name="Suzuki O."/>
            <person name="Nakagawa S."/>
            <person name="Senoh A."/>
            <person name="Mizoguchi H."/>
            <person name="Goto Y."/>
            <person name="Shimizu F."/>
            <person name="Wakebe H."/>
            <person name="Hishigaki H."/>
            <person name="Watanabe T."/>
            <person name="Sugiyama A."/>
            <person name="Takemoto M."/>
            <person name="Kawakami B."/>
            <person name="Yamazaki M."/>
            <person name="Watanabe K."/>
            <person name="Kumagai A."/>
            <person name="Itakura S."/>
            <person name="Fukuzumi Y."/>
            <person name="Fujimori Y."/>
            <person name="Komiyama M."/>
            <person name="Tashiro H."/>
            <person name="Tanigami A."/>
            <person name="Fujiwara T."/>
            <person name="Ono T."/>
            <person name="Yamada K."/>
            <person name="Fujii Y."/>
            <person name="Ozaki K."/>
            <person name="Hirao M."/>
            <person name="Ohmori Y."/>
            <person name="Kawabata A."/>
            <person name="Hikiji T."/>
            <person name="Kobatake N."/>
            <person name="Inagaki H."/>
            <person name="Ikema Y."/>
            <person name="Okamoto S."/>
            <person name="Okitani R."/>
            <person name="Kawakami T."/>
            <person name="Noguchi S."/>
            <person name="Itoh T."/>
            <person name="Shigeta K."/>
            <person name="Senba T."/>
            <person name="Matsumura K."/>
            <person name="Nakajima Y."/>
            <person name="Mizuno T."/>
            <person name="Morinaga M."/>
            <person name="Sasaki M."/>
            <person name="Togashi T."/>
            <person name="Oyama M."/>
            <person name="Hata H."/>
            <person name="Watanabe M."/>
            <person name="Komatsu T."/>
            <person name="Mizushima-Sugano J."/>
            <person name="Satoh T."/>
            <person name="Shirai Y."/>
            <person name="Takahashi Y."/>
            <person name="Nakagawa K."/>
            <person name="Okumura K."/>
            <person name="Nagase T."/>
            <person name="Nomura N."/>
            <person name="Kikuchi H."/>
            <person name="Masuho Y."/>
            <person name="Yamashita R."/>
            <person name="Nakai K."/>
            <person name="Yada T."/>
            <person name="Nakamura Y."/>
            <person name="Ohara O."/>
            <person name="Isogai T."/>
            <person name="Sugano S."/>
        </authorList>
    </citation>
    <scope>NUCLEOTIDE SEQUENCE [LARGE SCALE MRNA] (ISOFORM 1)</scope>
    <source>
        <tissue>Thymus</tissue>
    </source>
</reference>
<reference key="2">
    <citation type="journal article" date="2004" name="Nature">
        <title>The DNA sequence and biology of human chromosome 19.</title>
        <authorList>
            <person name="Grimwood J."/>
            <person name="Gordon L.A."/>
            <person name="Olsen A.S."/>
            <person name="Terry A."/>
            <person name="Schmutz J."/>
            <person name="Lamerdin J.E."/>
            <person name="Hellsten U."/>
            <person name="Goodstein D."/>
            <person name="Couronne O."/>
            <person name="Tran-Gyamfi M."/>
            <person name="Aerts A."/>
            <person name="Altherr M."/>
            <person name="Ashworth L."/>
            <person name="Bajorek E."/>
            <person name="Black S."/>
            <person name="Branscomb E."/>
            <person name="Caenepeel S."/>
            <person name="Carrano A.V."/>
            <person name="Caoile C."/>
            <person name="Chan Y.M."/>
            <person name="Christensen M."/>
            <person name="Cleland C.A."/>
            <person name="Copeland A."/>
            <person name="Dalin E."/>
            <person name="Dehal P."/>
            <person name="Denys M."/>
            <person name="Detter J.C."/>
            <person name="Escobar J."/>
            <person name="Flowers D."/>
            <person name="Fotopulos D."/>
            <person name="Garcia C."/>
            <person name="Georgescu A.M."/>
            <person name="Glavina T."/>
            <person name="Gomez M."/>
            <person name="Gonzales E."/>
            <person name="Groza M."/>
            <person name="Hammon N."/>
            <person name="Hawkins T."/>
            <person name="Haydu L."/>
            <person name="Ho I."/>
            <person name="Huang W."/>
            <person name="Israni S."/>
            <person name="Jett J."/>
            <person name="Kadner K."/>
            <person name="Kimball H."/>
            <person name="Kobayashi A."/>
            <person name="Larionov V."/>
            <person name="Leem S.-H."/>
            <person name="Lopez F."/>
            <person name="Lou Y."/>
            <person name="Lowry S."/>
            <person name="Malfatti S."/>
            <person name="Martinez D."/>
            <person name="McCready P.M."/>
            <person name="Medina C."/>
            <person name="Morgan J."/>
            <person name="Nelson K."/>
            <person name="Nolan M."/>
            <person name="Ovcharenko I."/>
            <person name="Pitluck S."/>
            <person name="Pollard M."/>
            <person name="Popkie A.P."/>
            <person name="Predki P."/>
            <person name="Quan G."/>
            <person name="Ramirez L."/>
            <person name="Rash S."/>
            <person name="Retterer J."/>
            <person name="Rodriguez A."/>
            <person name="Rogers S."/>
            <person name="Salamov A."/>
            <person name="Salazar A."/>
            <person name="She X."/>
            <person name="Smith D."/>
            <person name="Slezak T."/>
            <person name="Solovyev V."/>
            <person name="Thayer N."/>
            <person name="Tice H."/>
            <person name="Tsai M."/>
            <person name="Ustaszewska A."/>
            <person name="Vo N."/>
            <person name="Wagner M."/>
            <person name="Wheeler J."/>
            <person name="Wu K."/>
            <person name="Xie G."/>
            <person name="Yang J."/>
            <person name="Dubchak I."/>
            <person name="Furey T.S."/>
            <person name="DeJong P."/>
            <person name="Dickson M."/>
            <person name="Gordon D."/>
            <person name="Eichler E.E."/>
            <person name="Pennacchio L.A."/>
            <person name="Richardson P."/>
            <person name="Stubbs L."/>
            <person name="Rokhsar D.S."/>
            <person name="Myers R.M."/>
            <person name="Rubin E.M."/>
            <person name="Lucas S.M."/>
        </authorList>
    </citation>
    <scope>NUCLEOTIDE SEQUENCE [LARGE SCALE GENOMIC DNA]</scope>
</reference>
<reference key="3">
    <citation type="journal article" date="2004" name="Genome Res.">
        <title>The status, quality, and expansion of the NIH full-length cDNA project: the Mammalian Gene Collection (MGC).</title>
        <authorList>
            <consortium name="The MGC Project Team"/>
        </authorList>
    </citation>
    <scope>NUCLEOTIDE SEQUENCE [LARGE SCALE MRNA] (ISOFORM 2)</scope>
    <scope>VARIANT HIS-278</scope>
    <source>
        <tissue>Mammary carcinoma</tissue>
    </source>
</reference>
<reference key="4">
    <citation type="journal article" date="2013" name="J. Clin. Invest.">
        <title>The LINC complex is essential for hearing.</title>
        <authorList>
            <person name="Horn H.F."/>
            <person name="Brownstein Z."/>
            <person name="Lenz D.R."/>
            <person name="Shivatzki S."/>
            <person name="Dror A.A."/>
            <person name="Dagan-Rosenfeld O."/>
            <person name="Friedman L.M."/>
            <person name="Roux K.J."/>
            <person name="Kozlov S."/>
            <person name="Jeang K.T."/>
            <person name="Frydman M."/>
            <person name="Burke B."/>
            <person name="Stewart C.L."/>
            <person name="Avraham K.B."/>
        </authorList>
    </citation>
    <scope>INVOLVEMENT IN DFNB76</scope>
    <scope>SUBCELLULAR LOCATION</scope>
</reference>
<dbReference type="EMBL" id="AK093764">
    <property type="protein sequence ID" value="BAC04222.1"/>
    <property type="status" value="ALT_SEQ"/>
    <property type="molecule type" value="mRNA"/>
</dbReference>
<dbReference type="EMBL" id="AC002116">
    <property type="status" value="NOT_ANNOTATED_CDS"/>
    <property type="molecule type" value="Genomic_DNA"/>
</dbReference>
<dbReference type="EMBL" id="AF038458">
    <property type="status" value="NOT_ANNOTATED_CDS"/>
    <property type="molecule type" value="Genomic_DNA"/>
</dbReference>
<dbReference type="EMBL" id="BC052573">
    <property type="protein sequence ID" value="AAH52573.1"/>
    <property type="molecule type" value="mRNA"/>
</dbReference>
<dbReference type="CCDS" id="CCDS42553.1">
    <molecule id="Q8N205-1"/>
</dbReference>
<dbReference type="CCDS" id="CCDS77285.1">
    <molecule id="Q8N205-2"/>
</dbReference>
<dbReference type="RefSeq" id="NP_001034965.1">
    <molecule id="Q8N205-1"/>
    <property type="nucleotide sequence ID" value="NM_001039876.3"/>
</dbReference>
<dbReference type="RefSeq" id="NP_001284664.1">
    <molecule id="Q8N205-2"/>
    <property type="nucleotide sequence ID" value="NM_001297735.3"/>
</dbReference>
<dbReference type="PDB" id="6R16">
    <property type="method" value="X-ray"/>
    <property type="resolution" value="2.75 A"/>
    <property type="chains" value="G/H/I/J/K/L=376-404"/>
</dbReference>
<dbReference type="PDB" id="6WMD">
    <property type="method" value="X-ray"/>
    <property type="resolution" value="1.50 A"/>
    <property type="chains" value="B=377-404"/>
</dbReference>
<dbReference type="PDBsum" id="6R16"/>
<dbReference type="PDBsum" id="6WMD"/>
<dbReference type="SASBDB" id="Q8N205"/>
<dbReference type="SMR" id="Q8N205"/>
<dbReference type="BioGRID" id="127856">
    <property type="interactions" value="100"/>
</dbReference>
<dbReference type="ComplexPortal" id="CPX-7674">
    <property type="entry name" value="LINC complex, SUN2-SYNE4 variant"/>
</dbReference>
<dbReference type="ComplexPortal" id="CPX-7675">
    <property type="entry name" value="LINC complex, SUN1-SYNE4 variant"/>
</dbReference>
<dbReference type="FunCoup" id="Q8N205">
    <property type="interactions" value="50"/>
</dbReference>
<dbReference type="IntAct" id="Q8N205">
    <property type="interactions" value="96"/>
</dbReference>
<dbReference type="MINT" id="Q8N205"/>
<dbReference type="STRING" id="9606.ENSP00000316130"/>
<dbReference type="GlyGen" id="Q8N205">
    <property type="glycosylation" value="1 site"/>
</dbReference>
<dbReference type="iPTMnet" id="Q8N205"/>
<dbReference type="PhosphoSitePlus" id="Q8N205"/>
<dbReference type="SwissPalm" id="Q8N205"/>
<dbReference type="BioMuta" id="SYNE4"/>
<dbReference type="DMDM" id="158706458"/>
<dbReference type="jPOST" id="Q8N205"/>
<dbReference type="MassIVE" id="Q8N205"/>
<dbReference type="PaxDb" id="9606-ENSP00000316130"/>
<dbReference type="PeptideAtlas" id="Q8N205"/>
<dbReference type="ProteomicsDB" id="71647">
    <molecule id="Q8N205-1"/>
</dbReference>
<dbReference type="ProteomicsDB" id="71648">
    <molecule id="Q8N205-2"/>
</dbReference>
<dbReference type="Pumba" id="Q8N205"/>
<dbReference type="Antibodypedia" id="34811">
    <property type="antibodies" value="109 antibodies from 17 providers"/>
</dbReference>
<dbReference type="DNASU" id="163183"/>
<dbReference type="Ensembl" id="ENST00000324444.9">
    <molecule id="Q8N205-1"/>
    <property type="protein sequence ID" value="ENSP00000316130.3"/>
    <property type="gene ID" value="ENSG00000181392.17"/>
</dbReference>
<dbReference type="Ensembl" id="ENST00000340477.9">
    <molecule id="Q8N205-2"/>
    <property type="protein sequence ID" value="ENSP00000343152.5"/>
    <property type="gene ID" value="ENSG00000181392.17"/>
</dbReference>
<dbReference type="GeneID" id="163183"/>
<dbReference type="KEGG" id="hsa:163183"/>
<dbReference type="MANE-Select" id="ENST00000324444.9">
    <property type="protein sequence ID" value="ENSP00000316130.3"/>
    <property type="RefSeq nucleotide sequence ID" value="NM_001039876.3"/>
    <property type="RefSeq protein sequence ID" value="NP_001034965.1"/>
</dbReference>
<dbReference type="UCSC" id="uc002ocq.2">
    <molecule id="Q8N205-1"/>
    <property type="organism name" value="human"/>
</dbReference>
<dbReference type="AGR" id="HGNC:26703"/>
<dbReference type="CTD" id="163183"/>
<dbReference type="DisGeNET" id="163183"/>
<dbReference type="GeneCards" id="SYNE4"/>
<dbReference type="HGNC" id="HGNC:26703">
    <property type="gene designation" value="SYNE4"/>
</dbReference>
<dbReference type="HPA" id="ENSG00000181392">
    <property type="expression patterns" value="Low tissue specificity"/>
</dbReference>
<dbReference type="MalaCards" id="SYNE4"/>
<dbReference type="MIM" id="615535">
    <property type="type" value="gene"/>
</dbReference>
<dbReference type="MIM" id="615540">
    <property type="type" value="phenotype"/>
</dbReference>
<dbReference type="neXtProt" id="NX_Q8N205"/>
<dbReference type="OpenTargets" id="ENSG00000181392"/>
<dbReference type="Orphanet" id="90636">
    <property type="disease" value="Rare autosomal recessive non-syndromic sensorineural deafness type DFNB"/>
</dbReference>
<dbReference type="PharmGKB" id="PA145149542"/>
<dbReference type="VEuPathDB" id="HostDB:ENSG00000181392"/>
<dbReference type="eggNOG" id="ENOG502SZGW">
    <property type="taxonomic scope" value="Eukaryota"/>
</dbReference>
<dbReference type="GeneTree" id="ENSGT00510000049061"/>
<dbReference type="HOGENOM" id="CLU_034166_1_0_1"/>
<dbReference type="InParanoid" id="Q8N205"/>
<dbReference type="OMA" id="CEHPASG"/>
<dbReference type="OrthoDB" id="8676767at2759"/>
<dbReference type="PAN-GO" id="Q8N205">
    <property type="GO annotations" value="2 GO annotations based on evolutionary models"/>
</dbReference>
<dbReference type="PhylomeDB" id="Q8N205"/>
<dbReference type="PathwayCommons" id="Q8N205"/>
<dbReference type="SignaLink" id="Q8N205"/>
<dbReference type="SIGNOR" id="Q8N205"/>
<dbReference type="BioGRID-ORCS" id="163183">
    <property type="hits" value="15 hits in 1152 CRISPR screens"/>
</dbReference>
<dbReference type="ChiTaRS" id="SYNE4">
    <property type="organism name" value="human"/>
</dbReference>
<dbReference type="GenomeRNAi" id="163183"/>
<dbReference type="Pharos" id="Q8N205">
    <property type="development level" value="Tbio"/>
</dbReference>
<dbReference type="PRO" id="PR:Q8N205"/>
<dbReference type="Proteomes" id="UP000005640">
    <property type="component" value="Chromosome 19"/>
</dbReference>
<dbReference type="RNAct" id="Q8N205">
    <property type="molecule type" value="protein"/>
</dbReference>
<dbReference type="Bgee" id="ENSG00000181392">
    <property type="expression patterns" value="Expressed in pancreatic ductal cell and 117 other cell types or tissues"/>
</dbReference>
<dbReference type="ExpressionAtlas" id="Q8N205">
    <property type="expression patterns" value="baseline and differential"/>
</dbReference>
<dbReference type="GO" id="GO:0034993">
    <property type="term" value="C:meiotic nuclear membrane microtubule tethering complex"/>
    <property type="evidence" value="ECO:0007669"/>
    <property type="project" value="InterPro"/>
</dbReference>
<dbReference type="GO" id="GO:0005640">
    <property type="term" value="C:nuclear outer membrane"/>
    <property type="evidence" value="ECO:0000250"/>
    <property type="project" value="UniProtKB"/>
</dbReference>
<dbReference type="GO" id="GO:0045198">
    <property type="term" value="P:establishment of epithelial cell apical/basal polarity"/>
    <property type="evidence" value="ECO:0000250"/>
    <property type="project" value="UniProtKB"/>
</dbReference>
<dbReference type="InterPro" id="IPR012315">
    <property type="entry name" value="KASH"/>
</dbReference>
<dbReference type="InterPro" id="IPR030268">
    <property type="entry name" value="SYNE4"/>
</dbReference>
<dbReference type="PANTHER" id="PTHR21640">
    <property type="match status" value="1"/>
</dbReference>
<dbReference type="PANTHER" id="PTHR21640:SF1">
    <property type="entry name" value="NESPRIN-4"/>
    <property type="match status" value="1"/>
</dbReference>
<dbReference type="Pfam" id="PF10541">
    <property type="entry name" value="KASH"/>
    <property type="match status" value="1"/>
</dbReference>
<dbReference type="SMART" id="SM01249">
    <property type="entry name" value="KASH"/>
    <property type="match status" value="1"/>
</dbReference>
<dbReference type="PROSITE" id="PS51049">
    <property type="entry name" value="KASH"/>
    <property type="match status" value="1"/>
</dbReference>
<protein>
    <recommendedName>
        <fullName>Nesprin-4</fullName>
    </recommendedName>
    <alternativeName>
        <fullName>KASH domain-containing protein 4</fullName>
        <shortName>KASH4</shortName>
    </alternativeName>
    <alternativeName>
        <fullName>Nuclear envelope spectrin repeat protein 4</fullName>
    </alternativeName>
</protein>
<accession>Q8N205</accession>
<accession>A8MRS0</accession>
<accession>A8MYE3</accession>
<accession>Q7Z7L3</accession>
<keyword id="KW-0002">3D-structure</keyword>
<keyword id="KW-0025">Alternative splicing</keyword>
<keyword id="KW-0209">Deafness</keyword>
<keyword id="KW-1015">Disulfide bond</keyword>
<keyword id="KW-0472">Membrane</keyword>
<keyword id="KW-1010">Non-syndromic deafness</keyword>
<keyword id="KW-0539">Nucleus</keyword>
<keyword id="KW-1267">Proteomics identification</keyword>
<keyword id="KW-1185">Reference proteome</keyword>
<keyword id="KW-0812">Transmembrane</keyword>
<keyword id="KW-1133">Transmembrane helix</keyword>
<sequence>MALSLPLGPRLGSEPLNHPPGAPREADIVGCTVCPASGEESTSPEQAQTLGQDSLGPPEHFQGGPRGNEPAAHPPRWSTPSSYEDPAGGKHCEHPISGLEVLEAEQNSLHLCLLGLGRRLQDLEQGLGHWALAQSGMVQLQALQVDLRGAAERVEALLAFGEGLAQRSEPRAWAALEQILRALGAYRDSIFRRLWQLQAQLVSYSLVFEEANTLDQDLEVEGDSDWPGPGGVWGPWAPSSLPTSTELEWDPAGDIGGLGPLGQKTARTLGVPCELCGQRGPQGRGQGLEEADTSHSRQDMLESGLGHQKRLARHQRHSLLRKPQDKKRQASPHLQDVRLEGNPGAPDPASRQPLTFLLILFLLFLLLVGAMFLLPASGGPCCSHARIPRTPYLVLSYVNGLPPV</sequence>
<gene>
    <name type="primary">SYNE4</name>
    <name type="synonym">C19orf46</name>
</gene>
<proteinExistence type="evidence at protein level"/>
<comment type="function">
    <text evidence="1">As a component of the LINC (LInker of Nucleoskeleton and Cytoskeleton) complex, involved in the connection between the nuclear lamina and the cytoskeleton. The nucleocytoplasmic interactions established by the LINC complex play an important role in the transmission of mechanical forces across the nuclear envelope and in nuclear movement and positioning (By similarity). Behaves as a kinesin cargo, providing a functional binding site for kinesin-1 at the nuclear envelope. Hence may contribute to the establishment of secretory epithelial morphology by promoting kinesin-dependent apical migration of the centrosome and Golgi apparatus and basal localization of the nucleus (By similarity).</text>
</comment>
<comment type="subunit">
    <text evidence="1">Core component of LINC complexes which are composed of inner nuclear membrane SUN domain-containing proteins coupled to outer nuclear membrane KASH domain-containing nesprins. SUN and KASH domain-containing proteins seem to bind each other promiscuously; however, differentially expression of LINC complex constituents can give rise to specific assemblies (By similarity). Probably part of a SUN1-containing LINC complex. Interacts with kinesins KIF5B and KLC1 (By similarity).</text>
</comment>
<comment type="interaction">
    <interactant intactId="EBI-7131783">
        <id>Q8N205</id>
    </interactant>
    <interactant intactId="EBI-2602396">
        <id>Q9ULW3</id>
        <label>ABT1</label>
    </interactant>
    <organismsDiffer>false</organismsDiffer>
    <experiments>3</experiments>
</comment>
<comment type="interaction">
    <interactant intactId="EBI-7131783">
        <id>Q8N205</id>
    </interactant>
    <interactant intactId="EBI-10174479">
        <id>A8K660</id>
        <label>ADIPOQ</label>
    </interactant>
    <organismsDiffer>false</organismsDiffer>
    <experiments>3</experiments>
</comment>
<comment type="interaction">
    <interactant intactId="EBI-7131783">
        <id>Q8N205</id>
    </interactant>
    <interactant intactId="EBI-10254180">
        <id>Q6PL45</id>
        <label>BRICD5</label>
    </interactant>
    <organismsDiffer>false</organismsDiffer>
    <experiments>3</experiments>
</comment>
<comment type="interaction">
    <interactant intactId="EBI-7131783">
        <id>Q8N205</id>
    </interactant>
    <interactant intactId="EBI-1268321">
        <id>Q08722</id>
        <label>CD47</label>
    </interactant>
    <organismsDiffer>false</organismsDiffer>
    <experiments>3</experiments>
</comment>
<comment type="interaction">
    <interactant intactId="EBI-7131783">
        <id>Q8N205</id>
    </interactant>
    <interactant intactId="EBI-741885">
        <id>Q96LK0</id>
        <label>CEP19</label>
    </interactant>
    <organismsDiffer>false</organismsDiffer>
    <experiments>3</experiments>
</comment>
<comment type="interaction">
    <interactant intactId="EBI-7131783">
        <id>Q8N205</id>
    </interactant>
    <interactant intactId="EBI-740744">
        <id>O95471</id>
        <label>CLDN7</label>
    </interactant>
    <organismsDiffer>false</organismsDiffer>
    <experiments>3</experiments>
</comment>
<comment type="interaction">
    <interactant intactId="EBI-7131783">
        <id>Q8N205</id>
    </interactant>
    <interactant intactId="EBI-10215641">
        <id>P56748</id>
        <label>CLDN8</label>
    </interactant>
    <organismsDiffer>false</organismsDiffer>
    <experiments>3</experiments>
</comment>
<comment type="interaction">
    <interactant intactId="EBI-7131783">
        <id>Q8N205</id>
    </interactant>
    <interactant intactId="EBI-3939278">
        <id>Q9BXN2</id>
        <label>CLEC7A</label>
    </interactant>
    <organismsDiffer>false</organismsDiffer>
    <experiments>7</experiments>
</comment>
<comment type="interaction">
    <interactant intactId="EBI-7131783">
        <id>Q8N205</id>
    </interactant>
    <interactant intactId="EBI-2548702">
        <id>Q96DZ9</id>
        <label>CMTM5</label>
    </interactant>
    <organismsDiffer>false</organismsDiffer>
    <experiments>3</experiments>
</comment>
<comment type="interaction">
    <interactant intactId="EBI-7131783">
        <id>Q8N205</id>
    </interactant>
    <interactant intactId="EBI-10267100">
        <id>Q8N6G5</id>
        <label>CSGALNACT2</label>
    </interactant>
    <organismsDiffer>false</organismsDiffer>
    <experiments>4</experiments>
</comment>
<comment type="interaction">
    <interactant intactId="EBI-7131783">
        <id>Q8N205</id>
    </interactant>
    <interactant intactId="EBI-3911467">
        <id>Q07325</id>
        <label>CXCL9</label>
    </interactant>
    <organismsDiffer>false</organismsDiffer>
    <experiments>3</experiments>
</comment>
<comment type="interaction">
    <interactant intactId="EBI-7131783">
        <id>Q8N205</id>
    </interactant>
    <interactant intactId="EBI-10244198">
        <id>Q5J5C9</id>
        <label>DEFB121</label>
    </interactant>
    <organismsDiffer>false</organismsDiffer>
    <experiments>3</experiments>
</comment>
<comment type="interaction">
    <interactant intactId="EBI-7131783">
        <id>Q8N205</id>
    </interactant>
    <interactant intactId="EBI-10215665">
        <id>P56851</id>
        <label>EDDM3B</label>
    </interactant>
    <organismsDiffer>false</organismsDiffer>
    <experiments>3</experiments>
</comment>
<comment type="interaction">
    <interactant intactId="EBI-7131783">
        <id>Q8N205</id>
    </interactant>
    <interactant intactId="EBI-3906484">
        <id>O60344</id>
        <label>EEF1AKMT4-ECE2</label>
    </interactant>
    <organismsDiffer>false</organismsDiffer>
    <experiments>3</experiments>
</comment>
<comment type="interaction">
    <interactant intactId="EBI-7131783">
        <id>Q8N205</id>
    </interactant>
    <interactant intactId="EBI-4319440">
        <id>P54849</id>
        <label>EMP1</label>
    </interactant>
    <organismsDiffer>false</organismsDiffer>
    <experiments>3</experiments>
</comment>
<comment type="interaction">
    <interactant intactId="EBI-7131783">
        <id>Q8N205</id>
    </interactant>
    <interactant intactId="EBI-10187968">
        <id>O75355</id>
        <label>ENTPD3</label>
    </interactant>
    <organismsDiffer>false</organismsDiffer>
    <experiments>3</experiments>
</comment>
<comment type="interaction">
    <interactant intactId="EBI-7131783">
        <id>Q8N205</id>
    </interactant>
    <interactant intactId="EBI-2548784">
        <id>Q96D05</id>
        <label>FAM241B</label>
    </interactant>
    <organismsDiffer>false</organismsDiffer>
    <experiments>3</experiments>
</comment>
<comment type="interaction">
    <interactant intactId="EBI-7131783">
        <id>Q8N205</id>
    </interactant>
    <interactant intactId="EBI-743099">
        <id>Q969F0</id>
        <label>FATE1</label>
    </interactant>
    <organismsDiffer>false</organismsDiffer>
    <experiments>5</experiments>
</comment>
<comment type="interaction">
    <interactant intactId="EBI-7131783">
        <id>Q8N205</id>
    </interactant>
    <interactant intactId="EBI-2866431">
        <id>Q9Y287</id>
        <label>ITM2B</label>
    </interactant>
    <organismsDiffer>false</organismsDiffer>
    <experiments>3</experiments>
</comment>
<comment type="interaction">
    <interactant intactId="EBI-7131783">
        <id>Q8N205</id>
    </interactant>
    <interactant intactId="EBI-949319">
        <id>Q9NSK0</id>
        <label>KLC4</label>
    </interactant>
    <organismsDiffer>false</organismsDiffer>
    <experiments>6</experiments>
</comment>
<comment type="interaction">
    <interactant intactId="EBI-7131783">
        <id>Q8N205</id>
    </interactant>
    <interactant intactId="EBI-740929">
        <id>Q53G59</id>
        <label>KLHL12</label>
    </interactant>
    <organismsDiffer>false</organismsDiffer>
    <experiments>3</experiments>
</comment>
<comment type="interaction">
    <interactant intactId="EBI-7131783">
        <id>Q8N205</id>
    </interactant>
    <interactant intactId="EBI-750770">
        <id>Q96E93</id>
        <label>KLRG1</label>
    </interactant>
    <organismsDiffer>false</organismsDiffer>
    <experiments>3</experiments>
</comment>
<comment type="interaction">
    <interactant intactId="EBI-7131783">
        <id>Q8N205</id>
    </interactant>
    <interactant intactId="EBI-359761">
        <id>Q86UP2</id>
        <label>KTN1</label>
    </interactant>
    <organismsDiffer>false</organismsDiffer>
    <experiments>3</experiments>
</comment>
<comment type="interaction">
    <interactant intactId="EBI-7131783">
        <id>Q8N205</id>
    </interactant>
    <interactant intactId="EBI-750078">
        <id>Q13021</id>
        <label>MALL</label>
    </interactant>
    <organismsDiffer>false</organismsDiffer>
    <experiments>3</experiments>
</comment>
<comment type="interaction">
    <interactant intactId="EBI-7131783">
        <id>Q8N205</id>
    </interactant>
    <interactant intactId="EBI-10317612">
        <id>Q9P0N8</id>
        <label>MARCHF2</label>
    </interactant>
    <organismsDiffer>false</organismsDiffer>
    <experiments>3</experiments>
</comment>
<comment type="interaction">
    <interactant intactId="EBI-7131783">
        <id>Q8N205</id>
    </interactant>
    <interactant intactId="EBI-2903088">
        <id>Q16625</id>
        <label>OCLN</label>
    </interactant>
    <organismsDiffer>false</organismsDiffer>
    <experiments>4</experiments>
</comment>
<comment type="interaction">
    <interactant intactId="EBI-7131783">
        <id>Q8N205</id>
    </interactant>
    <interactant intactId="EBI-2804156">
        <id>Q6UX06</id>
        <label>OLFM4</label>
    </interactant>
    <organismsDiffer>false</organismsDiffer>
    <experiments>3</experiments>
</comment>
<comment type="interaction">
    <interactant intactId="EBI-7131783">
        <id>Q8N205</id>
    </interactant>
    <interactant intactId="EBI-10273677">
        <id>Q8TBU1</id>
        <label>OSTCL</label>
    </interactant>
    <organismsDiffer>false</organismsDiffer>
    <experiments>3</experiments>
</comment>
<comment type="interaction">
    <interactant intactId="EBI-7131783">
        <id>Q8N205</id>
    </interactant>
    <interactant intactId="EBI-10316423">
        <id>Q9NXK6</id>
        <label>PAQR5</label>
    </interactant>
    <organismsDiffer>false</organismsDiffer>
    <experiments>3</experiments>
</comment>
<comment type="interaction">
    <interactant intactId="EBI-7131783">
        <id>Q8N205</id>
    </interactant>
    <interactant intactId="EBI-10246897">
        <id>Q5TAB7</id>
        <label>RIPPLY2</label>
    </interactant>
    <organismsDiffer>false</organismsDiffer>
    <experiments>3</experiments>
</comment>
<comment type="interaction">
    <interactant intactId="EBI-7131783">
        <id>Q8N205</id>
    </interactant>
    <interactant intactId="EBI-8652744">
        <id>Q96IW7</id>
        <label>SEC22A</label>
    </interactant>
    <organismsDiffer>false</organismsDiffer>
    <experiments>3</experiments>
</comment>
<comment type="interaction">
    <interactant intactId="EBI-7131783">
        <id>Q8N205</id>
    </interactant>
    <interactant intactId="EBI-742673">
        <id>Q15437</id>
        <label>SEC23B</label>
    </interactant>
    <organismsDiffer>false</organismsDiffer>
    <experiments>3</experiments>
</comment>
<comment type="interaction">
    <interactant intactId="EBI-7131783">
        <id>Q8N205</id>
    </interactant>
    <interactant intactId="EBI-714881">
        <id>Q9HC62</id>
        <label>SENP2</label>
    </interactant>
    <organismsDiffer>false</organismsDiffer>
    <experiments>3</experiments>
</comment>
<comment type="interaction">
    <interactant intactId="EBI-7131783">
        <id>Q8N205</id>
    </interactant>
    <interactant intactId="EBI-10197617">
        <id>P11686</id>
        <label>SFTPC</label>
    </interactant>
    <organismsDiffer>false</organismsDiffer>
    <experiments>3</experiments>
</comment>
<comment type="interaction">
    <interactant intactId="EBI-7131783">
        <id>Q8N205</id>
    </interactant>
    <interactant intactId="EBI-10180786">
        <id>O00631</id>
        <label>SLN</label>
    </interactant>
    <organismsDiffer>false</organismsDiffer>
    <experiments>3</experiments>
</comment>
<comment type="interaction">
    <interactant intactId="EBI-7131783">
        <id>Q8N205</id>
    </interactant>
    <interactant intactId="EBI-8640191">
        <id>Q9NRQ5</id>
        <label>SMCO4</label>
    </interactant>
    <organismsDiffer>false</organismsDiffer>
    <experiments>3</experiments>
</comment>
<comment type="interaction">
    <interactant intactId="EBI-7131783">
        <id>Q8N205</id>
    </interactant>
    <interactant intactId="EBI-2796904">
        <id>O94901</id>
        <label>SUN1</label>
    </interactant>
    <organismsDiffer>false</organismsDiffer>
    <experiments>7</experiments>
</comment>
<comment type="interaction">
    <interactant intactId="EBI-7131783">
        <id>Q8N205</id>
    </interactant>
    <interactant intactId="EBI-1044964">
        <id>Q9UH99</id>
        <label>SUN2</label>
    </interactant>
    <organismsDiffer>false</organismsDiffer>
    <experiments>4</experiments>
</comment>
<comment type="interaction">
    <interactant intactId="EBI-7131783">
        <id>Q8N205</id>
    </interactant>
    <interactant intactId="EBI-8633987">
        <id>Q12893</id>
        <label>TMEM115</label>
    </interactant>
    <organismsDiffer>false</organismsDiffer>
    <experiments>3</experiments>
</comment>
<comment type="interaction">
    <interactant intactId="EBI-7131783">
        <id>Q8N205</id>
    </interactant>
    <interactant intactId="EBI-2844246">
        <id>Q9NV12</id>
        <label>TMEM140</label>
    </interactant>
    <organismsDiffer>false</organismsDiffer>
    <experiments>3</experiments>
</comment>
<comment type="interaction">
    <interactant intactId="EBI-7131783">
        <id>Q8N205</id>
    </interactant>
    <interactant intactId="EBI-348587">
        <id>Q9BVK8</id>
        <label>TMEM147</label>
    </interactant>
    <organismsDiffer>false</organismsDiffer>
    <experiments>3</experiments>
</comment>
<comment type="interaction">
    <interactant intactId="EBI-7131783">
        <id>Q8N205</id>
    </interactant>
    <interactant intactId="EBI-10255122">
        <id>Q6ZP80</id>
        <label>TMEM182</label>
    </interactant>
    <organismsDiffer>false</organismsDiffer>
    <experiments>3</experiments>
</comment>
<comment type="interaction">
    <interactant intactId="EBI-7131783">
        <id>Q8N205</id>
    </interactant>
    <interactant intactId="EBI-10314986">
        <id>Q9NWD8</id>
        <label>TMEM248</label>
    </interactant>
    <organismsDiffer>false</organismsDiffer>
    <experiments>3</experiments>
</comment>
<comment type="interaction">
    <interactant intactId="EBI-7131783">
        <id>Q8N205</id>
    </interactant>
    <interactant intactId="EBI-10312990">
        <id>Q9NRS4-3</id>
        <label>TMPRSS4</label>
    </interactant>
    <organismsDiffer>false</organismsDiffer>
    <experiments>3</experiments>
</comment>
<comment type="interaction">
    <interactant intactId="EBI-7131783">
        <id>Q8N205</id>
    </interactant>
    <interactant intactId="EBI-749955">
        <id>Q86WT6</id>
        <label>TRIM69</label>
    </interactant>
    <organismsDiffer>false</organismsDiffer>
    <experiments>3</experiments>
</comment>
<comment type="interaction">
    <interactant intactId="EBI-7131783">
        <id>Q8N205</id>
    </interactant>
    <interactant intactId="EBI-7361096">
        <id>O95858</id>
        <label>TSPAN15</label>
    </interactant>
    <organismsDiffer>false</organismsDiffer>
    <experiments>3</experiments>
</comment>
<comment type="interaction">
    <interactant intactId="EBI-7131783">
        <id>Q8N205</id>
    </interactant>
    <interactant intactId="EBI-10243654">
        <id>Q5BVD1</id>
        <label>TTMP</label>
    </interactant>
    <organismsDiffer>false</organismsDiffer>
    <experiments>3</experiments>
</comment>
<comment type="interaction">
    <interactant intactId="EBI-7131783">
        <id>Q8N205</id>
    </interactant>
    <interactant intactId="EBI-723716">
        <id>Q9UEU0</id>
        <label>VTI1B</label>
    </interactant>
    <organismsDiffer>false</organismsDiffer>
    <experiments>4</experiments>
</comment>
<comment type="interaction">
    <interactant intactId="EBI-7131783">
        <id>Q8N205</id>
    </interactant>
    <interactant intactId="EBI-10177272">
        <id>P15622-3</id>
        <label>ZNF250</label>
    </interactant>
    <organismsDiffer>false</organismsDiffer>
    <experiments>3</experiments>
</comment>
<comment type="interaction">
    <interactant intactId="EBI-12099160">
        <id>Q8N205-2</id>
    </interactant>
    <interactant intactId="EBI-10827839">
        <id>Q15848</id>
        <label>ADIPOQ</label>
    </interactant>
    <organismsDiffer>false</organismsDiffer>
    <experiments>6</experiments>
</comment>
<comment type="interaction">
    <interactant intactId="EBI-12099160">
        <id>Q8N205-2</id>
    </interactant>
    <interactant intactId="EBI-741885">
        <id>Q96LK0</id>
        <label>CEP19</label>
    </interactant>
    <organismsDiffer>false</organismsDiffer>
    <experiments>3</experiments>
</comment>
<comment type="interaction">
    <interactant intactId="EBI-12099160">
        <id>Q8N205-2</id>
    </interactant>
    <interactant intactId="EBI-12256978">
        <id>Q8N6F1-2</id>
        <label>CLDN19</label>
    </interactant>
    <organismsDiffer>false</organismsDiffer>
    <experiments>3</experiments>
</comment>
<comment type="interaction">
    <interactant intactId="EBI-12099160">
        <id>Q8N205-2</id>
    </interactant>
    <interactant intactId="EBI-16434756">
        <id>A0A0S2Z5K4</id>
        <label>CSGALNACT2</label>
    </interactant>
    <organismsDiffer>false</organismsDiffer>
    <experiments>3</experiments>
</comment>
<comment type="interaction">
    <interactant intactId="EBI-12099160">
        <id>Q8N205-2</id>
    </interactant>
    <interactant intactId="EBI-720480">
        <id>P24593</id>
        <label>IGFBP5</label>
    </interactant>
    <organismsDiffer>false</organismsDiffer>
    <experiments>3</experiments>
</comment>
<comment type="interaction">
    <interactant intactId="EBI-12099160">
        <id>Q8N205-2</id>
    </interactant>
    <interactant intactId="EBI-750078">
        <id>Q13021</id>
        <label>MALL</label>
    </interactant>
    <organismsDiffer>false</organismsDiffer>
    <experiments>3</experiments>
</comment>
<comment type="interaction">
    <interactant intactId="EBI-12099160">
        <id>Q8N205-2</id>
    </interactant>
    <interactant intactId="EBI-748974">
        <id>Q96CV9</id>
        <label>OPTN</label>
    </interactant>
    <organismsDiffer>false</organismsDiffer>
    <experiments>3</experiments>
</comment>
<comment type="interaction">
    <interactant intactId="EBI-12099160">
        <id>Q8N205-2</id>
    </interactant>
    <interactant intactId="EBI-11721828">
        <id>Q8IY26</id>
        <label>PLPP6</label>
    </interactant>
    <organismsDiffer>false</organismsDiffer>
    <experiments>3</experiments>
</comment>
<comment type="interaction">
    <interactant intactId="EBI-12099160">
        <id>Q8N205-2</id>
    </interactant>
    <interactant intactId="EBI-10197617">
        <id>P11686</id>
        <label>SFTPC</label>
    </interactant>
    <organismsDiffer>false</organismsDiffer>
    <experiments>4</experiments>
</comment>
<comment type="interaction">
    <interactant intactId="EBI-12099160">
        <id>Q8N205-2</id>
    </interactant>
    <interactant intactId="EBI-8640191">
        <id>Q9NRQ5</id>
        <label>SMCO4</label>
    </interactant>
    <organismsDiffer>false</organismsDiffer>
    <experiments>3</experiments>
</comment>
<comment type="interaction">
    <interactant intactId="EBI-12099160">
        <id>Q8N205-2</id>
    </interactant>
    <interactant intactId="EBI-710310">
        <id>Q15560</id>
        <label>TCEA2</label>
    </interactant>
    <organismsDiffer>false</organismsDiffer>
    <experiments>3</experiments>
</comment>
<comment type="interaction">
    <interactant intactId="EBI-12099160">
        <id>Q8N205-2</id>
    </interactant>
    <interactant intactId="EBI-11985915">
        <id>Q5T619</id>
        <label>ZNF648</label>
    </interactant>
    <organismsDiffer>false</organismsDiffer>
    <experiments>3</experiments>
</comment>
<comment type="subcellular location">
    <subcellularLocation>
        <location evidence="6">Nucleus outer membrane</location>
        <topology evidence="6">Single-pass type IV membrane protein</topology>
    </subcellularLocation>
    <text evidence="1">Localization at the nucleus outer membrane requires the presence of SUN1.</text>
</comment>
<comment type="alternative products">
    <event type="alternative splicing"/>
    <isoform>
        <id>Q8N205-1</id>
        <name>1</name>
        <sequence type="displayed"/>
    </isoform>
    <isoform>
        <id>Q8N205-2</id>
        <name>2</name>
        <sequence type="described" ref="VSP_028444"/>
    </isoform>
</comment>
<comment type="domain">
    <text evidence="1">The KASH domain, which contains a transmembrane domain, mediates the nuclear envelope targeting and is involved in the binding to SUN1 and SUN2 through recognition of their SUN domains.</text>
</comment>
<comment type="PTM">
    <text evidence="2">The disulfid bond with SUN1 or SUN2 is required for stability of the respective LINC complex under tensile forces.</text>
</comment>
<comment type="disease" evidence="6">
    <disease id="DI-03957">
        <name>Deafness, autosomal recessive, 76</name>
        <acronym>DFNB76</acronym>
        <description>A form of non-syndromic sensorineural deafness, a disorder resulting from damage to the neural receptors of the inner ear, the nerve pathways to the brain, or the area of the brain that receives sound information. DFNB76 affected individuals have onset of progressive high frequency hearing impairment between birth and 6 years of age. The hearing loss is severe at high frequencies by adulthood.</description>
        <dbReference type="MIM" id="615540"/>
    </disease>
    <text>The disease is caused by variants affecting the gene represented in this entry.</text>
</comment>
<comment type="similarity">
    <text evidence="8">Belongs to the nesprin family.</text>
</comment>
<comment type="sequence caution" evidence="8">
    <conflict type="miscellaneous discrepancy">
        <sequence resource="EMBL-CDS" id="BAC04222"/>
    </conflict>
    <text>Intron retention.</text>
</comment>
<feature type="chain" id="PRO_0000306264" description="Nesprin-4">
    <location>
        <begin position="1"/>
        <end position="404"/>
    </location>
</feature>
<feature type="topological domain" description="Cytoplasmic" evidence="3">
    <location>
        <begin position="1"/>
        <end position="355"/>
    </location>
</feature>
<feature type="transmembrane region" description="Helical; Anchor for type IV membrane protein" evidence="3">
    <location>
        <begin position="356"/>
        <end position="376"/>
    </location>
</feature>
<feature type="topological domain" description="Perinuclear space" evidence="3">
    <location>
        <begin position="377"/>
        <end position="404"/>
    </location>
</feature>
<feature type="domain" description="KASH" evidence="3">
    <location>
        <begin position="347"/>
        <end position="404"/>
    </location>
</feature>
<feature type="region of interest" description="Disordered" evidence="4">
    <location>
        <begin position="1"/>
        <end position="91"/>
    </location>
</feature>
<feature type="region of interest" description="Disordered" evidence="4">
    <location>
        <begin position="277"/>
        <end position="347"/>
    </location>
</feature>
<feature type="compositionally biased region" description="Polar residues" evidence="4">
    <location>
        <begin position="39"/>
        <end position="52"/>
    </location>
</feature>
<feature type="compositionally biased region" description="Basic residues" evidence="4">
    <location>
        <begin position="307"/>
        <end position="320"/>
    </location>
</feature>
<feature type="disulfide bond" description="Interchain (with C-563 in SUN2); alternate" evidence="2">
    <location>
        <position position="381"/>
    </location>
</feature>
<feature type="disulfide bond" description="Interchain (with C-657 in SUN1)" evidence="2">
    <location>
        <position position="381"/>
    </location>
</feature>
<feature type="splice variant" id="VSP_028444" description="In isoform 2." evidence="7">
    <location>
        <begin position="94"/>
        <end position="206"/>
    </location>
</feature>
<feature type="sequence variant" id="VAR_035284" description="In dbSNP:rs34818970.">
    <original>S</original>
    <variation>L</variation>
    <location>
        <position position="224"/>
    </location>
</feature>
<feature type="sequence variant" id="VAR_035285" description="In dbSNP:rs2285422." evidence="5">
    <original>Q</original>
    <variation>H</variation>
    <location>
        <position position="278"/>
    </location>
</feature>
<feature type="strand" evidence="9">
    <location>
        <begin position="394"/>
        <end position="397"/>
    </location>
</feature>
<name>SYNE4_HUMAN</name>
<evidence type="ECO:0000250" key="1"/>
<evidence type="ECO:0000250" key="2">
    <source>
        <dbReference type="UniProtKB" id="Q8WXH0"/>
    </source>
</evidence>
<evidence type="ECO:0000255" key="3">
    <source>
        <dbReference type="PROSITE-ProRule" id="PRU00385"/>
    </source>
</evidence>
<evidence type="ECO:0000256" key="4">
    <source>
        <dbReference type="SAM" id="MobiDB-lite"/>
    </source>
</evidence>
<evidence type="ECO:0000269" key="5">
    <source>
    </source>
</evidence>
<evidence type="ECO:0000269" key="6">
    <source>
    </source>
</evidence>
<evidence type="ECO:0000303" key="7">
    <source>
    </source>
</evidence>
<evidence type="ECO:0000305" key="8"/>
<evidence type="ECO:0007829" key="9">
    <source>
        <dbReference type="PDB" id="6WMD"/>
    </source>
</evidence>